<comment type="function">
    <text evidence="1">Required for maturation of urease via the functional incorporation of the urease nickel metallocenter.</text>
</comment>
<comment type="subunit">
    <text evidence="1">UreD, UreF and UreG form a complex that acts as a GTP-hydrolysis-dependent molecular chaperone, activating the urease apoprotein by helping to assemble the nickel containing metallocenter of UreC. The UreE protein probably delivers the nickel.</text>
</comment>
<comment type="subcellular location">
    <subcellularLocation>
        <location evidence="1">Cytoplasm</location>
    </subcellularLocation>
</comment>
<comment type="similarity">
    <text evidence="1">Belongs to the UreD family.</text>
</comment>
<reference key="1">
    <citation type="journal article" date="2011" name="Stand. Genomic Sci.">
        <title>Complete genome sequence of the halophilic and highly halotolerant Chromohalobacter salexigens type strain (1H11(T)).</title>
        <authorList>
            <person name="Copeland A."/>
            <person name="O'Connor K."/>
            <person name="Lucas S."/>
            <person name="Lapidus A."/>
            <person name="Berry K.W."/>
            <person name="Detter J.C."/>
            <person name="Del Rio T.G."/>
            <person name="Hammon N."/>
            <person name="Dalin E."/>
            <person name="Tice H."/>
            <person name="Pitluck S."/>
            <person name="Bruce D."/>
            <person name="Goodwin L."/>
            <person name="Han C."/>
            <person name="Tapia R."/>
            <person name="Saunders E."/>
            <person name="Schmutz J."/>
            <person name="Brettin T."/>
            <person name="Larimer F."/>
            <person name="Land M."/>
            <person name="Hauser L."/>
            <person name="Vargas C."/>
            <person name="Nieto J.J."/>
            <person name="Kyrpides N.C."/>
            <person name="Ivanova N."/>
            <person name="Goker M."/>
            <person name="Klenk H.P."/>
            <person name="Csonka L.N."/>
            <person name="Woyke T."/>
        </authorList>
    </citation>
    <scope>NUCLEOTIDE SEQUENCE [LARGE SCALE GENOMIC DNA]</scope>
    <source>
        <strain>ATCC BAA-138 / DSM 3043 / CIP 106854 / NCIMB 13768 / 1H11</strain>
    </source>
</reference>
<organism>
    <name type="scientific">Chromohalobacter salexigens (strain ATCC BAA-138 / DSM 3043 / CIP 106854 / NCIMB 13768 / 1H11)</name>
    <dbReference type="NCBI Taxonomy" id="290398"/>
    <lineage>
        <taxon>Bacteria</taxon>
        <taxon>Pseudomonadati</taxon>
        <taxon>Pseudomonadota</taxon>
        <taxon>Gammaproteobacteria</taxon>
        <taxon>Oceanospirillales</taxon>
        <taxon>Halomonadaceae</taxon>
        <taxon>Chromohalobacter</taxon>
    </lineage>
</organism>
<feature type="chain" id="PRO_0000340445" description="Urease accessory protein UreD">
    <location>
        <begin position="1"/>
        <end position="313"/>
    </location>
</feature>
<feature type="region of interest" description="Disordered" evidence="2">
    <location>
        <begin position="1"/>
        <end position="30"/>
    </location>
</feature>
<feature type="compositionally biased region" description="Gly residues" evidence="2">
    <location>
        <begin position="15"/>
        <end position="26"/>
    </location>
</feature>
<keyword id="KW-0143">Chaperone</keyword>
<keyword id="KW-0963">Cytoplasm</keyword>
<keyword id="KW-0996">Nickel insertion</keyword>
<keyword id="KW-1185">Reference proteome</keyword>
<dbReference type="EMBL" id="CP000285">
    <property type="protein sequence ID" value="ABE59658.1"/>
    <property type="molecule type" value="Genomic_DNA"/>
</dbReference>
<dbReference type="RefSeq" id="WP_011507604.1">
    <property type="nucleotide sequence ID" value="NC_007963.1"/>
</dbReference>
<dbReference type="SMR" id="Q1QV50"/>
<dbReference type="STRING" id="290398.Csal_2308"/>
<dbReference type="GeneID" id="95335020"/>
<dbReference type="KEGG" id="csa:Csal_2308"/>
<dbReference type="eggNOG" id="COG0829">
    <property type="taxonomic scope" value="Bacteria"/>
</dbReference>
<dbReference type="HOGENOM" id="CLU_056339_0_0_6"/>
<dbReference type="OrthoDB" id="9798842at2"/>
<dbReference type="Proteomes" id="UP000000239">
    <property type="component" value="Chromosome"/>
</dbReference>
<dbReference type="GO" id="GO:0005737">
    <property type="term" value="C:cytoplasm"/>
    <property type="evidence" value="ECO:0007669"/>
    <property type="project" value="UniProtKB-SubCell"/>
</dbReference>
<dbReference type="GO" id="GO:0016151">
    <property type="term" value="F:nickel cation binding"/>
    <property type="evidence" value="ECO:0007669"/>
    <property type="project" value="UniProtKB-UniRule"/>
</dbReference>
<dbReference type="HAMAP" id="MF_01384">
    <property type="entry name" value="UreD"/>
    <property type="match status" value="1"/>
</dbReference>
<dbReference type="InterPro" id="IPR002669">
    <property type="entry name" value="UreD"/>
</dbReference>
<dbReference type="PANTHER" id="PTHR33643">
    <property type="entry name" value="UREASE ACCESSORY PROTEIN D"/>
    <property type="match status" value="1"/>
</dbReference>
<dbReference type="PANTHER" id="PTHR33643:SF1">
    <property type="entry name" value="UREASE ACCESSORY PROTEIN D"/>
    <property type="match status" value="1"/>
</dbReference>
<dbReference type="Pfam" id="PF01774">
    <property type="entry name" value="UreD"/>
    <property type="match status" value="1"/>
</dbReference>
<accession>Q1QV50</accession>
<proteinExistence type="inferred from homology"/>
<evidence type="ECO:0000255" key="1">
    <source>
        <dbReference type="HAMAP-Rule" id="MF_01384"/>
    </source>
</evidence>
<evidence type="ECO:0000256" key="2">
    <source>
        <dbReference type="SAM" id="MobiDB-lite"/>
    </source>
</evidence>
<name>URED_CHRSD</name>
<gene>
    <name evidence="1" type="primary">ureD</name>
    <name type="ordered locus">Csal_2308</name>
</gene>
<protein>
    <recommendedName>
        <fullName evidence="1">Urease accessory protein UreD</fullName>
    </recommendedName>
</protein>
<sequence length="313" mass="34796">MTDLSFPGQAASPGEGAGQTPSGGSGHRFDTRRHWAASLSLGFRDRDGRTRMTRARHHGPLRVQRPFYPETGHVPDARYAEPCHVYLLHPPGGLVSGDELRIDIEAESGAHALLTTPAATKLYRADSHGVCWGQHTHLSVRPGALLEWLPQETLCFDGARGMQSTTLDVQGDGCCVGWEVLALGRPASQLPFVSGRVEQRFALTRDGRPLWRERQPLDPMHPRFHGYWGQGGSTVQATLWAVGLTAPQAAVEALRECLPASRHWAVTQRRDVLLLRYLGDERNAAWEICQQAWEVLRPWLSSRQASVPRIWMT</sequence>